<proteinExistence type="evidence at protein level"/>
<sequence>VPPHIY</sequence>
<organism>
    <name type="scientific">Crocodylus siamensis</name>
    <name type="common">Siamese crocodile</name>
    <dbReference type="NCBI Taxonomy" id="68455"/>
    <lineage>
        <taxon>Eukaryota</taxon>
        <taxon>Metazoa</taxon>
        <taxon>Chordata</taxon>
        <taxon>Craniata</taxon>
        <taxon>Vertebrata</taxon>
        <taxon>Euteleostomi</taxon>
        <taxon>Archelosauria</taxon>
        <taxon>Archosauria</taxon>
        <taxon>Crocodylia</taxon>
        <taxon>Longirostres</taxon>
        <taxon>Crocodylidae</taxon>
        <taxon>Crocodylus</taxon>
    </lineage>
</organism>
<keyword id="KW-0903">Direct protein sequencing</keyword>
<protein>
    <recommendedName>
        <fullName evidence="1">Peptide 2</fullName>
    </recommendedName>
</protein>
<evidence type="ECO:0000303" key="1">
    <source ref="1"/>
</evidence>
<reference key="1">
    <citation type="submission" date="2022-06" db="UniProtKB">
        <title>Isolation and identification of antioxidative peptides from crocodile meat hydrolysates using silica gel chromatography.</title>
        <authorList>
            <person name="Liu Y."/>
            <person name="Yan X."/>
            <person name="Rui C."/>
            <person name="He N."/>
            <person name="Hai-Hang L."/>
        </authorList>
    </citation>
    <scope>PROTEIN SEQUENCE</scope>
</reference>
<feature type="chain" id="PRO_0000456654" description="Peptide 2">
    <location>
        <begin position="1" status="less than"/>
        <end position="6" status="greater than"/>
    </location>
</feature>
<feature type="non-terminal residue" evidence="1">
    <location>
        <position position="1"/>
    </location>
</feature>
<feature type="non-terminal residue" evidence="1">
    <location>
        <position position="6"/>
    </location>
</feature>
<accession>C0HM49</accession>
<name>PEP2_CROSI</name>